<accession>B1XSQ8</accession>
<comment type="function">
    <text evidence="1">Binds 23S rRNA and is also seen to make contacts with the A and possibly P site tRNAs.</text>
</comment>
<comment type="subunit">
    <text evidence="1">Part of the 50S ribosomal subunit.</text>
</comment>
<comment type="similarity">
    <text evidence="1">Belongs to the universal ribosomal protein uL16 family.</text>
</comment>
<name>RL16_POLNS</name>
<proteinExistence type="inferred from homology"/>
<organism>
    <name type="scientific">Polynucleobacter necessarius subsp. necessarius (strain STIR1)</name>
    <dbReference type="NCBI Taxonomy" id="452638"/>
    <lineage>
        <taxon>Bacteria</taxon>
        <taxon>Pseudomonadati</taxon>
        <taxon>Pseudomonadota</taxon>
        <taxon>Betaproteobacteria</taxon>
        <taxon>Burkholderiales</taxon>
        <taxon>Burkholderiaceae</taxon>
        <taxon>Polynucleobacter</taxon>
    </lineage>
</organism>
<feature type="chain" id="PRO_1000143008" description="Large ribosomal subunit protein uL16">
    <location>
        <begin position="1"/>
        <end position="137"/>
    </location>
</feature>
<feature type="region of interest" description="Disordered" evidence="2">
    <location>
        <begin position="1"/>
        <end position="22"/>
    </location>
</feature>
<feature type="compositionally biased region" description="Basic residues" evidence="2">
    <location>
        <begin position="1"/>
        <end position="13"/>
    </location>
</feature>
<protein>
    <recommendedName>
        <fullName evidence="1">Large ribosomal subunit protein uL16</fullName>
    </recommendedName>
    <alternativeName>
        <fullName evidence="3">50S ribosomal protein L16</fullName>
    </alternativeName>
</protein>
<evidence type="ECO:0000255" key="1">
    <source>
        <dbReference type="HAMAP-Rule" id="MF_01342"/>
    </source>
</evidence>
<evidence type="ECO:0000256" key="2">
    <source>
        <dbReference type="SAM" id="MobiDB-lite"/>
    </source>
</evidence>
<evidence type="ECO:0000305" key="3"/>
<dbReference type="EMBL" id="CP001010">
    <property type="protein sequence ID" value="ACB43385.1"/>
    <property type="molecule type" value="Genomic_DNA"/>
</dbReference>
<dbReference type="SMR" id="B1XSQ8"/>
<dbReference type="STRING" id="452638.Pnec_0057"/>
<dbReference type="KEGG" id="pne:Pnec_0057"/>
<dbReference type="eggNOG" id="COG0197">
    <property type="taxonomic scope" value="Bacteria"/>
</dbReference>
<dbReference type="HOGENOM" id="CLU_078858_2_1_4"/>
<dbReference type="OrthoDB" id="9802589at2"/>
<dbReference type="GO" id="GO:0022625">
    <property type="term" value="C:cytosolic large ribosomal subunit"/>
    <property type="evidence" value="ECO:0007669"/>
    <property type="project" value="TreeGrafter"/>
</dbReference>
<dbReference type="GO" id="GO:0019843">
    <property type="term" value="F:rRNA binding"/>
    <property type="evidence" value="ECO:0007669"/>
    <property type="project" value="UniProtKB-UniRule"/>
</dbReference>
<dbReference type="GO" id="GO:0003735">
    <property type="term" value="F:structural constituent of ribosome"/>
    <property type="evidence" value="ECO:0007669"/>
    <property type="project" value="InterPro"/>
</dbReference>
<dbReference type="GO" id="GO:0000049">
    <property type="term" value="F:tRNA binding"/>
    <property type="evidence" value="ECO:0007669"/>
    <property type="project" value="UniProtKB-KW"/>
</dbReference>
<dbReference type="GO" id="GO:0006412">
    <property type="term" value="P:translation"/>
    <property type="evidence" value="ECO:0007669"/>
    <property type="project" value="UniProtKB-UniRule"/>
</dbReference>
<dbReference type="CDD" id="cd01433">
    <property type="entry name" value="Ribosomal_L16_L10e"/>
    <property type="match status" value="1"/>
</dbReference>
<dbReference type="FunFam" id="3.90.1170.10:FF:000001">
    <property type="entry name" value="50S ribosomal protein L16"/>
    <property type="match status" value="1"/>
</dbReference>
<dbReference type="Gene3D" id="3.90.1170.10">
    <property type="entry name" value="Ribosomal protein L10e/L16"/>
    <property type="match status" value="1"/>
</dbReference>
<dbReference type="HAMAP" id="MF_01342">
    <property type="entry name" value="Ribosomal_uL16"/>
    <property type="match status" value="1"/>
</dbReference>
<dbReference type="InterPro" id="IPR047873">
    <property type="entry name" value="Ribosomal_uL16"/>
</dbReference>
<dbReference type="InterPro" id="IPR000114">
    <property type="entry name" value="Ribosomal_uL16_bact-type"/>
</dbReference>
<dbReference type="InterPro" id="IPR020798">
    <property type="entry name" value="Ribosomal_uL16_CS"/>
</dbReference>
<dbReference type="InterPro" id="IPR016180">
    <property type="entry name" value="Ribosomal_uL16_dom"/>
</dbReference>
<dbReference type="InterPro" id="IPR036920">
    <property type="entry name" value="Ribosomal_uL16_sf"/>
</dbReference>
<dbReference type="NCBIfam" id="TIGR01164">
    <property type="entry name" value="rplP_bact"/>
    <property type="match status" value="1"/>
</dbReference>
<dbReference type="PANTHER" id="PTHR12220">
    <property type="entry name" value="50S/60S RIBOSOMAL PROTEIN L16"/>
    <property type="match status" value="1"/>
</dbReference>
<dbReference type="PANTHER" id="PTHR12220:SF13">
    <property type="entry name" value="LARGE RIBOSOMAL SUBUNIT PROTEIN UL16M"/>
    <property type="match status" value="1"/>
</dbReference>
<dbReference type="Pfam" id="PF00252">
    <property type="entry name" value="Ribosomal_L16"/>
    <property type="match status" value="1"/>
</dbReference>
<dbReference type="PRINTS" id="PR00060">
    <property type="entry name" value="RIBOSOMALL16"/>
</dbReference>
<dbReference type="SUPFAM" id="SSF54686">
    <property type="entry name" value="Ribosomal protein L16p/L10e"/>
    <property type="match status" value="1"/>
</dbReference>
<dbReference type="PROSITE" id="PS00586">
    <property type="entry name" value="RIBOSOMAL_L16_1"/>
    <property type="match status" value="1"/>
</dbReference>
<gene>
    <name evidence="1" type="primary">rplP</name>
    <name type="ordered locus">Pnec_0057</name>
</gene>
<reference key="1">
    <citation type="journal article" date="2013" name="Proc. Natl. Acad. Sci. U.S.A.">
        <title>Polynucleobacter necessarius, a model for genome reduction in both free-living and symbiotic bacteria.</title>
        <authorList>
            <person name="Boscaro V."/>
            <person name="Felletti M."/>
            <person name="Vannini C."/>
            <person name="Ackerman M.S."/>
            <person name="Chain P.S."/>
            <person name="Malfatti S."/>
            <person name="Vergez L.M."/>
            <person name="Shin M."/>
            <person name="Doak T.G."/>
            <person name="Lynch M."/>
            <person name="Petroni G."/>
        </authorList>
    </citation>
    <scope>NUCLEOTIDE SEQUENCE [LARGE SCALE GENOMIC DNA]</scope>
    <source>
        <strain>STIR1</strain>
    </source>
</reference>
<sequence length="137" mass="15449">MLQPKRRKYRKEQKGRNTGVATRGSSVAFGDFGLKAVGRGRLTARQIESARRAMTRHIKRGGRIWIRIFPDKPISQKPAEVRMGNGKGNPEYYVAEIQPGKVLYEMDGVDEQLAREAFKLAAAKLPLQTTFVIRHLG</sequence>
<keyword id="KW-0687">Ribonucleoprotein</keyword>
<keyword id="KW-0689">Ribosomal protein</keyword>
<keyword id="KW-0694">RNA-binding</keyword>
<keyword id="KW-0699">rRNA-binding</keyword>
<keyword id="KW-0820">tRNA-binding</keyword>